<keyword id="KW-0007">Acetylation</keyword>
<keyword id="KW-0066">ATP synthesis</keyword>
<keyword id="KW-0139">CF(1)</keyword>
<keyword id="KW-0150">Chloroplast</keyword>
<keyword id="KW-0375">Hydrogen ion transport</keyword>
<keyword id="KW-0406">Ion transport</keyword>
<keyword id="KW-0472">Membrane</keyword>
<keyword id="KW-0934">Plastid</keyword>
<keyword id="KW-1185">Reference proteome</keyword>
<keyword id="KW-0793">Thylakoid</keyword>
<keyword id="KW-0813">Transport</keyword>
<reference key="1">
    <citation type="journal article" date="1988" name="Nucleic Acids Res.">
        <title>Nucleotide sequence of chloroplast CF1-ATPase epsilon-subunit and elongator tRNAMet genes from Arabidopsis thaliana.</title>
        <authorList>
            <person name="Chen H.-C."/>
            <person name="Wintz H."/>
            <person name="Weil J.-H."/>
            <person name="Pillay D.T.N."/>
        </authorList>
    </citation>
    <scope>NUCLEOTIDE SEQUENCE [GENOMIC DNA]</scope>
    <source>
        <strain>cv. Landsberg erecta</strain>
    </source>
</reference>
<reference key="2">
    <citation type="journal article" date="1999" name="DNA Res.">
        <title>Complete structure of the chloroplast genome of Arabidopsis thaliana.</title>
        <authorList>
            <person name="Sato S."/>
            <person name="Nakamura Y."/>
            <person name="Kaneko T."/>
            <person name="Asamizu E."/>
            <person name="Tabata S."/>
        </authorList>
    </citation>
    <scope>NUCLEOTIDE SEQUENCE [LARGE SCALE GENOMIC DNA]</scope>
    <source>
        <strain>cv. Columbia</strain>
    </source>
</reference>
<reference key="3">
    <citation type="journal article" date="2012" name="Mol. Cell. Proteomics">
        <title>Comparative large-scale characterisation of plant vs. mammal proteins reveals similar and idiosyncratic N-alpha acetylation features.</title>
        <authorList>
            <person name="Bienvenut W.V."/>
            <person name="Sumpton D."/>
            <person name="Martinez A."/>
            <person name="Lilla S."/>
            <person name="Espagne C."/>
            <person name="Meinnel T."/>
            <person name="Giglione C."/>
        </authorList>
    </citation>
    <scope>ACETYLATION [LARGE SCALE ANALYSIS] AT THR-2</scope>
    <scope>CLEAVAGE OF INITIATOR METHIONINE [LARGE SCALE ANALYSIS]</scope>
    <scope>IDENTIFICATION BY MASS SPECTROMETRY [LARGE SCALE ANALYSIS]</scope>
</reference>
<evidence type="ECO:0000255" key="1">
    <source>
        <dbReference type="HAMAP-Rule" id="MF_00530"/>
    </source>
</evidence>
<evidence type="ECO:0000305" key="2"/>
<evidence type="ECO:0007744" key="3">
    <source>
    </source>
</evidence>
<gene>
    <name evidence="1" type="primary">atpE</name>
    <name type="ordered locus">AtCg00470</name>
</gene>
<accession>P09468</accession>
<organism>
    <name type="scientific">Arabidopsis thaliana</name>
    <name type="common">Mouse-ear cress</name>
    <dbReference type="NCBI Taxonomy" id="3702"/>
    <lineage>
        <taxon>Eukaryota</taxon>
        <taxon>Viridiplantae</taxon>
        <taxon>Streptophyta</taxon>
        <taxon>Embryophyta</taxon>
        <taxon>Tracheophyta</taxon>
        <taxon>Spermatophyta</taxon>
        <taxon>Magnoliopsida</taxon>
        <taxon>eudicotyledons</taxon>
        <taxon>Gunneridae</taxon>
        <taxon>Pentapetalae</taxon>
        <taxon>rosids</taxon>
        <taxon>malvids</taxon>
        <taxon>Brassicales</taxon>
        <taxon>Brassicaceae</taxon>
        <taxon>Camelineae</taxon>
        <taxon>Arabidopsis</taxon>
    </lineage>
</organism>
<sequence length="132" mass="14499">MTLNLCVLTPNRIVWDSEVKEIILSTNSGQIGVLANHAPIATAVDIGILKIRLANQWLTMALMGGFARIGNNEITILVNDAEKNSDIDPQEAQQTLEIAEANLRKAEGKRQTIEANLALRRARTRVEALNTI</sequence>
<protein>
    <recommendedName>
        <fullName evidence="1">ATP synthase epsilon chain, chloroplastic</fullName>
    </recommendedName>
    <alternativeName>
        <fullName evidence="1">ATP synthase F1 sector epsilon subunit</fullName>
    </alternativeName>
    <alternativeName>
        <fullName evidence="1">F-ATPase epsilon subunit</fullName>
    </alternativeName>
</protein>
<geneLocation type="chloroplast"/>
<name>ATPE_ARATH</name>
<proteinExistence type="evidence at protein level"/>
<dbReference type="EMBL" id="X12889">
    <property type="protein sequence ID" value="CAA31381.1"/>
    <property type="molecule type" value="Genomic_DNA"/>
</dbReference>
<dbReference type="EMBL" id="AP000423">
    <property type="protein sequence ID" value="BAA84391.1"/>
    <property type="molecule type" value="Genomic_DNA"/>
</dbReference>
<dbReference type="PIR" id="S01903">
    <property type="entry name" value="S01903"/>
</dbReference>
<dbReference type="RefSeq" id="NP_051065.1">
    <property type="nucleotide sequence ID" value="NC_000932.1"/>
</dbReference>
<dbReference type="SMR" id="P09468"/>
<dbReference type="BioGRID" id="29962">
    <property type="interactions" value="2"/>
</dbReference>
<dbReference type="FunCoup" id="P09468">
    <property type="interactions" value="282"/>
</dbReference>
<dbReference type="STRING" id="3702.P09468"/>
<dbReference type="iPTMnet" id="P09468"/>
<dbReference type="PaxDb" id="3702-ATCG00470.1"/>
<dbReference type="ProteomicsDB" id="241090"/>
<dbReference type="EnsemblPlants" id="ATCG00470.1">
    <property type="protein sequence ID" value="ATCG00470.1"/>
    <property type="gene ID" value="ATCG00470"/>
</dbReference>
<dbReference type="GeneID" id="844758"/>
<dbReference type="Gramene" id="ATCG00470.1">
    <property type="protein sequence ID" value="ATCG00470.1"/>
    <property type="gene ID" value="ATCG00470"/>
</dbReference>
<dbReference type="KEGG" id="ath:ArthCp028"/>
<dbReference type="Araport" id="ATCG00470"/>
<dbReference type="TAIR" id="ATCG00470">
    <property type="gene designation" value="ATPE"/>
</dbReference>
<dbReference type="eggNOG" id="KOG1758">
    <property type="taxonomic scope" value="Eukaryota"/>
</dbReference>
<dbReference type="HOGENOM" id="CLU_084338_1_2_1"/>
<dbReference type="InParanoid" id="P09468"/>
<dbReference type="OMA" id="EERLYQG"/>
<dbReference type="BioCyc" id="ARA:ATCG00470-MONOMER"/>
<dbReference type="PRO" id="PR:P09468"/>
<dbReference type="Proteomes" id="UP000006548">
    <property type="component" value="Chloroplast Pltd"/>
</dbReference>
<dbReference type="ExpressionAtlas" id="P09468">
    <property type="expression patterns" value="baseline and differential"/>
</dbReference>
<dbReference type="GO" id="GO:0009507">
    <property type="term" value="C:chloroplast"/>
    <property type="evidence" value="ECO:0007005"/>
    <property type="project" value="TAIR"/>
</dbReference>
<dbReference type="GO" id="GO:0009941">
    <property type="term" value="C:chloroplast envelope"/>
    <property type="evidence" value="ECO:0007005"/>
    <property type="project" value="TAIR"/>
</dbReference>
<dbReference type="GO" id="GO:0009534">
    <property type="term" value="C:chloroplast thylakoid"/>
    <property type="evidence" value="ECO:0007005"/>
    <property type="project" value="TAIR"/>
</dbReference>
<dbReference type="GO" id="GO:0009535">
    <property type="term" value="C:chloroplast thylakoid membrane"/>
    <property type="evidence" value="ECO:0007005"/>
    <property type="project" value="TAIR"/>
</dbReference>
<dbReference type="GO" id="GO:0009536">
    <property type="term" value="C:plastid"/>
    <property type="evidence" value="ECO:0007005"/>
    <property type="project" value="TAIR"/>
</dbReference>
<dbReference type="GO" id="GO:0045259">
    <property type="term" value="C:proton-transporting ATP synthase complex"/>
    <property type="evidence" value="ECO:0007669"/>
    <property type="project" value="UniProtKB-KW"/>
</dbReference>
<dbReference type="GO" id="GO:0009579">
    <property type="term" value="C:thylakoid"/>
    <property type="evidence" value="ECO:0007005"/>
    <property type="project" value="TAIR"/>
</dbReference>
<dbReference type="GO" id="GO:0005524">
    <property type="term" value="F:ATP binding"/>
    <property type="evidence" value="ECO:0007669"/>
    <property type="project" value="UniProtKB-UniRule"/>
</dbReference>
<dbReference type="GO" id="GO:0003729">
    <property type="term" value="F:mRNA binding"/>
    <property type="evidence" value="ECO:0000314"/>
    <property type="project" value="TAIR"/>
</dbReference>
<dbReference type="GO" id="GO:0046933">
    <property type="term" value="F:proton-transporting ATP synthase activity, rotational mechanism"/>
    <property type="evidence" value="ECO:0007669"/>
    <property type="project" value="UniProtKB-UniRule"/>
</dbReference>
<dbReference type="CDD" id="cd12152">
    <property type="entry name" value="F1-ATPase_delta"/>
    <property type="match status" value="1"/>
</dbReference>
<dbReference type="FunFam" id="2.60.15.10:FF:000002">
    <property type="entry name" value="ATP synthase epsilon chain, chloroplastic"/>
    <property type="match status" value="1"/>
</dbReference>
<dbReference type="Gene3D" id="6.10.140.480">
    <property type="match status" value="1"/>
</dbReference>
<dbReference type="Gene3D" id="2.60.15.10">
    <property type="entry name" value="F0F1 ATP synthase delta/epsilon subunit, N-terminal"/>
    <property type="match status" value="1"/>
</dbReference>
<dbReference type="HAMAP" id="MF_00530">
    <property type="entry name" value="ATP_synth_epsil_bac"/>
    <property type="match status" value="1"/>
</dbReference>
<dbReference type="InterPro" id="IPR001469">
    <property type="entry name" value="ATP_synth_F1_dsu/esu"/>
</dbReference>
<dbReference type="InterPro" id="IPR020546">
    <property type="entry name" value="ATP_synth_F1_dsu/esu_N"/>
</dbReference>
<dbReference type="InterPro" id="IPR020547">
    <property type="entry name" value="ATP_synth_F1_esu_C"/>
</dbReference>
<dbReference type="InterPro" id="IPR036771">
    <property type="entry name" value="ATPsynth_dsu/esu_N"/>
</dbReference>
<dbReference type="NCBIfam" id="TIGR01216">
    <property type="entry name" value="ATP_synt_epsi"/>
    <property type="match status" value="1"/>
</dbReference>
<dbReference type="PANTHER" id="PTHR13822">
    <property type="entry name" value="ATP SYNTHASE DELTA/EPSILON CHAIN"/>
    <property type="match status" value="1"/>
</dbReference>
<dbReference type="PANTHER" id="PTHR13822:SF10">
    <property type="entry name" value="ATP SYNTHASE EPSILON CHAIN, CHLOROPLASTIC"/>
    <property type="match status" value="1"/>
</dbReference>
<dbReference type="Pfam" id="PF00401">
    <property type="entry name" value="ATP-synt_DE"/>
    <property type="match status" value="1"/>
</dbReference>
<dbReference type="Pfam" id="PF02823">
    <property type="entry name" value="ATP-synt_DE_N"/>
    <property type="match status" value="1"/>
</dbReference>
<dbReference type="SUPFAM" id="SSF51344">
    <property type="entry name" value="Epsilon subunit of F1F0-ATP synthase N-terminal domain"/>
    <property type="match status" value="1"/>
</dbReference>
<comment type="function">
    <text evidence="1">Produces ATP from ADP in the presence of a proton gradient across the membrane.</text>
</comment>
<comment type="subunit">
    <text evidence="1">F-type ATPases have 2 components, CF(1) - the catalytic core - and CF(0) - the membrane proton channel. CF(1) has five subunits: alpha(3), beta(3), gamma(1), delta(1), epsilon(1). CF(0) has three main subunits: a, b and c.</text>
</comment>
<comment type="subcellular location">
    <subcellularLocation>
        <location evidence="1">Plastid</location>
        <location evidence="1">Chloroplast thylakoid membrane</location>
        <topology evidence="1">Peripheral membrane protein</topology>
    </subcellularLocation>
</comment>
<comment type="similarity">
    <text evidence="1">Belongs to the ATPase epsilon chain family.</text>
</comment>
<feature type="initiator methionine" description="Removed" evidence="3">
    <location>
        <position position="1"/>
    </location>
</feature>
<feature type="chain" id="PRO_0000188254" description="ATP synthase epsilon chain, chloroplastic">
    <location>
        <begin position="2"/>
        <end position="132"/>
    </location>
</feature>
<feature type="modified residue" description="N-acetylthreonine" evidence="3">
    <location>
        <position position="2"/>
    </location>
</feature>
<feature type="sequence conflict" description="In Ref. 1; CAA31381." evidence="2" ref="1">
    <original>K</original>
    <variation>E</variation>
    <location>
        <position position="20"/>
    </location>
</feature>
<feature type="sequence conflict" description="In Ref. 1; CAA31381." evidence="2" ref="1">
    <original>K</original>
    <variation>T</variation>
    <location>
        <position position="50"/>
    </location>
</feature>